<protein>
    <recommendedName>
        <fullName evidence="1">Ribonuclease H</fullName>
        <shortName evidence="1">RNase H</shortName>
        <ecNumber evidence="1">3.1.26.4</ecNumber>
    </recommendedName>
</protein>
<proteinExistence type="inferred from homology"/>
<gene>
    <name evidence="1" type="primary">rnhA</name>
    <name type="ordered locus">NMC1544</name>
</gene>
<reference key="1">
    <citation type="journal article" date="2007" name="PLoS Genet.">
        <title>Meningococcal genetic variation mechanisms viewed through comparative analysis of serogroup C strain FAM18.</title>
        <authorList>
            <person name="Bentley S.D."/>
            <person name="Vernikos G.S."/>
            <person name="Snyder L.A.S."/>
            <person name="Churcher C."/>
            <person name="Arrowsmith C."/>
            <person name="Chillingworth T."/>
            <person name="Cronin A."/>
            <person name="Davis P.H."/>
            <person name="Holroyd N.E."/>
            <person name="Jagels K."/>
            <person name="Maddison M."/>
            <person name="Moule S."/>
            <person name="Rabbinowitsch E."/>
            <person name="Sharp S."/>
            <person name="Unwin L."/>
            <person name="Whitehead S."/>
            <person name="Quail M.A."/>
            <person name="Achtman M."/>
            <person name="Barrell B.G."/>
            <person name="Saunders N.J."/>
            <person name="Parkhill J."/>
        </authorList>
    </citation>
    <scope>NUCLEOTIDE SEQUENCE [LARGE SCALE GENOMIC DNA]</scope>
    <source>
        <strain>ATCC 700532 / DSM 15464 / FAM18</strain>
    </source>
</reference>
<name>RNH_NEIMF</name>
<dbReference type="EC" id="3.1.26.4" evidence="1"/>
<dbReference type="EMBL" id="AM421808">
    <property type="protein sequence ID" value="CAM10739.1"/>
    <property type="molecule type" value="Genomic_DNA"/>
</dbReference>
<dbReference type="RefSeq" id="WP_002220505.1">
    <property type="nucleotide sequence ID" value="NC_008767.1"/>
</dbReference>
<dbReference type="SMR" id="A1KV38"/>
<dbReference type="KEGG" id="nmc:NMC1544"/>
<dbReference type="HOGENOM" id="CLU_030894_6_0_4"/>
<dbReference type="Proteomes" id="UP000002286">
    <property type="component" value="Chromosome"/>
</dbReference>
<dbReference type="GO" id="GO:0005737">
    <property type="term" value="C:cytoplasm"/>
    <property type="evidence" value="ECO:0007669"/>
    <property type="project" value="UniProtKB-SubCell"/>
</dbReference>
<dbReference type="GO" id="GO:0000287">
    <property type="term" value="F:magnesium ion binding"/>
    <property type="evidence" value="ECO:0007669"/>
    <property type="project" value="UniProtKB-UniRule"/>
</dbReference>
<dbReference type="GO" id="GO:0003676">
    <property type="term" value="F:nucleic acid binding"/>
    <property type="evidence" value="ECO:0007669"/>
    <property type="project" value="InterPro"/>
</dbReference>
<dbReference type="GO" id="GO:0004523">
    <property type="term" value="F:RNA-DNA hybrid ribonuclease activity"/>
    <property type="evidence" value="ECO:0007669"/>
    <property type="project" value="UniProtKB-UniRule"/>
</dbReference>
<dbReference type="GO" id="GO:0043137">
    <property type="term" value="P:DNA replication, removal of RNA primer"/>
    <property type="evidence" value="ECO:0007669"/>
    <property type="project" value="TreeGrafter"/>
</dbReference>
<dbReference type="CDD" id="cd09278">
    <property type="entry name" value="RNase_HI_prokaryote_like"/>
    <property type="match status" value="1"/>
</dbReference>
<dbReference type="FunFam" id="3.30.420.10:FF:000008">
    <property type="entry name" value="Ribonuclease H"/>
    <property type="match status" value="1"/>
</dbReference>
<dbReference type="Gene3D" id="3.30.420.10">
    <property type="entry name" value="Ribonuclease H-like superfamily/Ribonuclease H"/>
    <property type="match status" value="1"/>
</dbReference>
<dbReference type="HAMAP" id="MF_00042">
    <property type="entry name" value="RNase_H"/>
    <property type="match status" value="1"/>
</dbReference>
<dbReference type="InterPro" id="IPR050092">
    <property type="entry name" value="RNase_H"/>
</dbReference>
<dbReference type="InterPro" id="IPR012337">
    <property type="entry name" value="RNaseH-like_sf"/>
</dbReference>
<dbReference type="InterPro" id="IPR002156">
    <property type="entry name" value="RNaseH_domain"/>
</dbReference>
<dbReference type="InterPro" id="IPR036397">
    <property type="entry name" value="RNaseH_sf"/>
</dbReference>
<dbReference type="InterPro" id="IPR022892">
    <property type="entry name" value="RNaseHI"/>
</dbReference>
<dbReference type="NCBIfam" id="NF001236">
    <property type="entry name" value="PRK00203.1"/>
    <property type="match status" value="1"/>
</dbReference>
<dbReference type="PANTHER" id="PTHR10642">
    <property type="entry name" value="RIBONUCLEASE H1"/>
    <property type="match status" value="1"/>
</dbReference>
<dbReference type="PANTHER" id="PTHR10642:SF26">
    <property type="entry name" value="RIBONUCLEASE H1"/>
    <property type="match status" value="1"/>
</dbReference>
<dbReference type="Pfam" id="PF00075">
    <property type="entry name" value="RNase_H"/>
    <property type="match status" value="1"/>
</dbReference>
<dbReference type="SUPFAM" id="SSF53098">
    <property type="entry name" value="Ribonuclease H-like"/>
    <property type="match status" value="1"/>
</dbReference>
<dbReference type="PROSITE" id="PS50879">
    <property type="entry name" value="RNASE_H_1"/>
    <property type="match status" value="1"/>
</dbReference>
<evidence type="ECO:0000255" key="1">
    <source>
        <dbReference type="HAMAP-Rule" id="MF_00042"/>
    </source>
</evidence>
<evidence type="ECO:0000255" key="2">
    <source>
        <dbReference type="PROSITE-ProRule" id="PRU00408"/>
    </source>
</evidence>
<keyword id="KW-0963">Cytoplasm</keyword>
<keyword id="KW-0255">Endonuclease</keyword>
<keyword id="KW-0378">Hydrolase</keyword>
<keyword id="KW-0460">Magnesium</keyword>
<keyword id="KW-0479">Metal-binding</keyword>
<keyword id="KW-0540">Nuclease</keyword>
<comment type="function">
    <text evidence="1">Endonuclease that specifically degrades the RNA of RNA-DNA hybrids.</text>
</comment>
<comment type="catalytic activity">
    <reaction evidence="1">
        <text>Endonucleolytic cleavage to 5'-phosphomonoester.</text>
        <dbReference type="EC" id="3.1.26.4"/>
    </reaction>
</comment>
<comment type="cofactor">
    <cofactor evidence="1">
        <name>Mg(2+)</name>
        <dbReference type="ChEBI" id="CHEBI:18420"/>
    </cofactor>
    <text evidence="1">Binds 1 Mg(2+) ion per subunit. May bind a second metal ion at a regulatory site, or after substrate binding.</text>
</comment>
<comment type="subunit">
    <text evidence="1">Monomer.</text>
</comment>
<comment type="subcellular location">
    <subcellularLocation>
        <location evidence="1">Cytoplasm</location>
    </subcellularLocation>
</comment>
<comment type="similarity">
    <text evidence="1">Belongs to the RNase H family.</text>
</comment>
<feature type="chain" id="PRO_1000074650" description="Ribonuclease H">
    <location>
        <begin position="1"/>
        <end position="145"/>
    </location>
</feature>
<feature type="domain" description="RNase H type-1" evidence="2">
    <location>
        <begin position="1"/>
        <end position="142"/>
    </location>
</feature>
<feature type="binding site" evidence="1">
    <location>
        <position position="10"/>
    </location>
    <ligand>
        <name>Mg(2+)</name>
        <dbReference type="ChEBI" id="CHEBI:18420"/>
        <label>1</label>
    </ligand>
</feature>
<feature type="binding site" evidence="1">
    <location>
        <position position="10"/>
    </location>
    <ligand>
        <name>Mg(2+)</name>
        <dbReference type="ChEBI" id="CHEBI:18420"/>
        <label>2</label>
    </ligand>
</feature>
<feature type="binding site" evidence="1">
    <location>
        <position position="48"/>
    </location>
    <ligand>
        <name>Mg(2+)</name>
        <dbReference type="ChEBI" id="CHEBI:18420"/>
        <label>1</label>
    </ligand>
</feature>
<feature type="binding site" evidence="1">
    <location>
        <position position="70"/>
    </location>
    <ligand>
        <name>Mg(2+)</name>
        <dbReference type="ChEBI" id="CHEBI:18420"/>
        <label>1</label>
    </ligand>
</feature>
<feature type="binding site" evidence="1">
    <location>
        <position position="134"/>
    </location>
    <ligand>
        <name>Mg(2+)</name>
        <dbReference type="ChEBI" id="CHEBI:18420"/>
        <label>2</label>
    </ligand>
</feature>
<sequence>MDTPVYLYTDGACKGNPGAGGWGVLMRYGSHEKELFGGEAQTTNNRMELTAVIEGLKSLKRRCTVIICTDSQYVKNGMENWIHGWKRNGWKTAAKQPVKNDDLWKELDTLVGQHQVSWTWVKGHAGHAENERADDLANRGAAQFS</sequence>
<organism>
    <name type="scientific">Neisseria meningitidis serogroup C / serotype 2a (strain ATCC 700532 / DSM 15464 / FAM18)</name>
    <dbReference type="NCBI Taxonomy" id="272831"/>
    <lineage>
        <taxon>Bacteria</taxon>
        <taxon>Pseudomonadati</taxon>
        <taxon>Pseudomonadota</taxon>
        <taxon>Betaproteobacteria</taxon>
        <taxon>Neisseriales</taxon>
        <taxon>Neisseriaceae</taxon>
        <taxon>Neisseria</taxon>
    </lineage>
</organism>
<accession>A1KV38</accession>